<comment type="function">
    <text evidence="1 5">Involved in cell growth. Activates CDK2, a kinase involved in the control of the cell cycle, by phosphorylating residue 'Thr-160' (By similarity). Required for high-level Shh responses in the developing neural tube. Together with TBC1D32, controls the structure of the primary cilium by coordinating assembly of the ciliary membrane and axoneme, allowing GLI2 to be properly activated in response to SHH signaling.</text>
</comment>
<comment type="catalytic activity">
    <reaction>
        <text>L-seryl-[protein] + ATP = O-phospho-L-seryl-[protein] + ADP + H(+)</text>
        <dbReference type="Rhea" id="RHEA:17989"/>
        <dbReference type="Rhea" id="RHEA-COMP:9863"/>
        <dbReference type="Rhea" id="RHEA-COMP:11604"/>
        <dbReference type="ChEBI" id="CHEBI:15378"/>
        <dbReference type="ChEBI" id="CHEBI:29999"/>
        <dbReference type="ChEBI" id="CHEBI:30616"/>
        <dbReference type="ChEBI" id="CHEBI:83421"/>
        <dbReference type="ChEBI" id="CHEBI:456216"/>
        <dbReference type="EC" id="2.7.11.22"/>
    </reaction>
</comment>
<comment type="catalytic activity">
    <reaction>
        <text>L-threonyl-[protein] + ATP = O-phospho-L-threonyl-[protein] + ADP + H(+)</text>
        <dbReference type="Rhea" id="RHEA:46608"/>
        <dbReference type="Rhea" id="RHEA-COMP:11060"/>
        <dbReference type="Rhea" id="RHEA-COMP:11605"/>
        <dbReference type="ChEBI" id="CHEBI:15378"/>
        <dbReference type="ChEBI" id="CHEBI:30013"/>
        <dbReference type="ChEBI" id="CHEBI:30616"/>
        <dbReference type="ChEBI" id="CHEBI:61977"/>
        <dbReference type="ChEBI" id="CHEBI:456216"/>
        <dbReference type="EC" id="2.7.11.22"/>
    </reaction>
</comment>
<comment type="subunit">
    <text evidence="1 5">Monomer (By similarity). Interacts with MAK (By similarity). Interacts with TBC1D32.</text>
</comment>
<comment type="subcellular location">
    <subcellularLocation>
        <location evidence="5">Nucleus</location>
    </subcellularLocation>
    <subcellularLocation>
        <location evidence="5">Cytoplasm</location>
    </subcellularLocation>
    <subcellularLocation>
        <location evidence="5">Cell projection</location>
        <location evidence="5">Cilium</location>
    </subcellularLocation>
</comment>
<comment type="alternative products">
    <event type="alternative splicing"/>
    <isoform>
        <id>Q9JHU3-1</id>
        <name>1</name>
        <sequence type="displayed"/>
    </isoform>
    <isoform>
        <id>Q9JHU3-2</id>
        <name>2</name>
        <name>Cardiac CCRK</name>
        <sequence type="described" ref="VSP_016753 VSP_016754"/>
    </isoform>
</comment>
<comment type="similarity">
    <text evidence="7">Belongs to the protein kinase superfamily. CMGC Ser/Thr protein kinase family. CDC2/CDKX subfamily.</text>
</comment>
<name>CDK20_MOUSE</name>
<proteinExistence type="evidence at protein level"/>
<gene>
    <name type="primary">Cdk20</name>
    <name type="synonym">Ccrk</name>
    <name type="synonym">Cdch</name>
</gene>
<organism>
    <name type="scientific">Mus musculus</name>
    <name type="common">Mouse</name>
    <dbReference type="NCBI Taxonomy" id="10090"/>
    <lineage>
        <taxon>Eukaryota</taxon>
        <taxon>Metazoa</taxon>
        <taxon>Chordata</taxon>
        <taxon>Craniata</taxon>
        <taxon>Vertebrata</taxon>
        <taxon>Euteleostomi</taxon>
        <taxon>Mammalia</taxon>
        <taxon>Eutheria</taxon>
        <taxon>Euarchontoglires</taxon>
        <taxon>Glires</taxon>
        <taxon>Rodentia</taxon>
        <taxon>Myomorpha</taxon>
        <taxon>Muroidea</taxon>
        <taxon>Muridae</taxon>
        <taxon>Murinae</taxon>
        <taxon>Mus</taxon>
        <taxon>Mus</taxon>
    </lineage>
</organism>
<feature type="chain" id="PRO_0000085703" description="Cyclin-dependent kinase 20">
    <location>
        <begin position="1"/>
        <end position="346"/>
    </location>
</feature>
<feature type="domain" description="Protein kinase" evidence="2">
    <location>
        <begin position="4"/>
        <end position="288"/>
    </location>
</feature>
<feature type="region of interest" description="Disordered" evidence="4">
    <location>
        <begin position="298"/>
        <end position="324"/>
    </location>
</feature>
<feature type="compositionally biased region" description="Pro residues" evidence="4">
    <location>
        <begin position="303"/>
        <end position="318"/>
    </location>
</feature>
<feature type="active site" description="Proton acceptor" evidence="2 3">
    <location>
        <position position="127"/>
    </location>
</feature>
<feature type="binding site" evidence="2">
    <location>
        <begin position="10"/>
        <end position="18"/>
    </location>
    <ligand>
        <name>ATP</name>
        <dbReference type="ChEBI" id="CHEBI:30616"/>
    </ligand>
</feature>
<feature type="binding site" evidence="2">
    <location>
        <position position="33"/>
    </location>
    <ligand>
        <name>ATP</name>
        <dbReference type="ChEBI" id="CHEBI:30616"/>
    </ligand>
</feature>
<feature type="splice variant" id="VSP_016753" description="In isoform 2." evidence="6">
    <original>WYRAPELLYGARQYDQGVDLWAVGCIMGELLNGSPLFPGENDIEQLCCVLRILGTPSPRVWPEITELPDYNKISFK</original>
    <variation>SSLSCRTTTRSPLRSRCPCPWRRCCLTSLPRHWICWVNSFSTLLTSASQLPRLSSISTSSQLPCLPIHLSCRFLSV</variation>
    <location>
        <begin position="168"/>
        <end position="243"/>
    </location>
</feature>
<feature type="splice variant" id="VSP_016754" description="In isoform 2." evidence="6">
    <location>
        <begin position="244"/>
        <end position="346"/>
    </location>
</feature>
<feature type="sequence conflict" description="In Ref. 2; AAW82351." evidence="7" ref="2">
    <original>I</original>
    <variation>F</variation>
    <location>
        <position position="44"/>
    </location>
</feature>
<feature type="sequence conflict" description="In Ref. 2; AAW82351." evidence="7" ref="2">
    <original>I</original>
    <variation>M</variation>
    <location>
        <position position="58"/>
    </location>
</feature>
<feature type="sequence conflict" description="In Ref. 2; AAW82351." evidence="7" ref="2">
    <original>S</original>
    <variation>N</variation>
    <location>
        <position position="61"/>
    </location>
</feature>
<feature type="sequence conflict" description="In Ref. 2; AAW82351." evidence="7" ref="2">
    <original>A</original>
    <variation>G</variation>
    <location>
        <position position="75"/>
    </location>
</feature>
<feature type="sequence conflict" description="In Ref. 2; AAW82351." evidence="7" ref="2">
    <original>P</original>
    <variation>Q</variation>
    <location>
        <position position="101"/>
    </location>
</feature>
<feature type="sequence conflict" description="In Ref. 2; AAW82351." evidence="7" ref="2">
    <original>G</original>
    <variation>S</variation>
    <location>
        <position position="157"/>
    </location>
</feature>
<evidence type="ECO:0000250" key="1"/>
<evidence type="ECO:0000255" key="2">
    <source>
        <dbReference type="PROSITE-ProRule" id="PRU00159"/>
    </source>
</evidence>
<evidence type="ECO:0000255" key="3">
    <source>
        <dbReference type="PROSITE-ProRule" id="PRU10027"/>
    </source>
</evidence>
<evidence type="ECO:0000256" key="4">
    <source>
        <dbReference type="SAM" id="MobiDB-lite"/>
    </source>
</evidence>
<evidence type="ECO:0000269" key="5">
    <source>
    </source>
</evidence>
<evidence type="ECO:0000303" key="6">
    <source ref="2"/>
</evidence>
<evidence type="ECO:0000305" key="7"/>
<sequence length="346" mass="38379">MDQYCILGRIGEGAHGIVFKAKHVETGEIVALKKVALRRLEDGIPNQALREIKALQEIEDSQYVVQLKAVFPHGAGFVLAFEFMLSDLAEVVRHAQRPLAPAQVKSYLQMLLKGVAFCHANNIVHRDLKPANLLISASGQLKIADFGLARVFSPDGGRLYTHQVATRWYRAPELLYGARQYDQGVDLWAVGCIMGELLNGSPLFPGENDIEQLCCVLRILGTPSPRVWPEITELPDYNKISFKEQAPVPLEEVLPDASPQALDLLGQFLLYPPRQRIAASQALLHQYFFTAPLPAHPSELPIPQRPGGPAPKAHPGPPHVHDFHVDRPLEESLLNPELIRPFIPEG</sequence>
<keyword id="KW-0025">Alternative splicing</keyword>
<keyword id="KW-0067">ATP-binding</keyword>
<keyword id="KW-0131">Cell cycle</keyword>
<keyword id="KW-0132">Cell division</keyword>
<keyword id="KW-0966">Cell projection</keyword>
<keyword id="KW-0969">Cilium</keyword>
<keyword id="KW-0963">Cytoplasm</keyword>
<keyword id="KW-0217">Developmental protein</keyword>
<keyword id="KW-0418">Kinase</keyword>
<keyword id="KW-0547">Nucleotide-binding</keyword>
<keyword id="KW-0539">Nucleus</keyword>
<keyword id="KW-1185">Reference proteome</keyword>
<keyword id="KW-0723">Serine/threonine-protein kinase</keyword>
<keyword id="KW-0808">Transferase</keyword>
<reference key="1">
    <citation type="submission" date="2000-07" db="EMBL/GenBank/DDBJ databases">
        <title>PNQALRE a novel member of the CDK family.</title>
        <authorList>
            <person name="Liao J.C."/>
            <person name="Fisher R.P."/>
        </authorList>
    </citation>
    <scope>NUCLEOTIDE SEQUENCE [MRNA] (ISOFORM 1)</scope>
    <source>
        <strain>129/SvJ</strain>
    </source>
</reference>
<reference key="2">
    <citation type="submission" date="2005-01" db="EMBL/GenBank/DDBJ databases">
        <title>Mouse p42(CCRK), cardiac variant.</title>
        <authorList>
            <person name="Qiu H."/>
            <person name="Depre C."/>
        </authorList>
    </citation>
    <scope>NUCLEOTIDE SEQUENCE [MRNA] (ISOFORM 2)</scope>
    <source>
        <strain>C57BL/6J</strain>
        <tissue>Heart</tissue>
    </source>
</reference>
<reference key="3">
    <citation type="journal article" date="2004" name="Genome Res.">
        <title>The status, quality, and expansion of the NIH full-length cDNA project: the Mammalian Gene Collection (MGC).</title>
        <authorList>
            <consortium name="The MGC Project Team"/>
        </authorList>
    </citation>
    <scope>NUCLEOTIDE SEQUENCE [LARGE SCALE MRNA] (ISOFORM 1)</scope>
    <source>
        <tissue>Eye</tissue>
    </source>
</reference>
<reference key="4">
    <citation type="journal article" date="2010" name="Dev. Cell">
        <title>Broad-minded links cell cycle-related kinase to cilia assembly and hedgehog signal transduction.</title>
        <authorList>
            <person name="Ko H.W."/>
            <person name="Norman R.X."/>
            <person name="Tran J."/>
            <person name="Fuller K.P."/>
            <person name="Fukuda M."/>
            <person name="Eggenschwiler J.T."/>
        </authorList>
    </citation>
    <scope>FUNCTION</scope>
    <scope>INTERACTION WITH TBC1D32</scope>
    <scope>IDENTIFICATION BY MASS SPECTROMETRY</scope>
    <scope>SUBCELLULAR LOCATION</scope>
</reference>
<protein>
    <recommendedName>
        <fullName>Cyclin-dependent kinase 20</fullName>
        <ecNumber>2.7.11.22</ecNumber>
    </recommendedName>
    <alternativeName>
        <fullName>CDK-activating kinase p42</fullName>
        <shortName>CAK-kinase p42</shortName>
    </alternativeName>
    <alternativeName>
        <fullName>CDK-related protein kinase PNQLARE</fullName>
    </alternativeName>
    <alternativeName>
        <fullName>Cell cycle-related kinase</fullName>
    </alternativeName>
    <alternativeName>
        <fullName>Cell division protein kinase 20</fullName>
    </alternativeName>
    <alternativeName>
        <fullName>Cyclin-dependent protein kinase H</fullName>
    </alternativeName>
    <alternativeName>
        <fullName>Cyclin-kinase-activating kinase p42</fullName>
    </alternativeName>
</protein>
<accession>Q9JHU3</accession>
<accession>Q5EDC2</accession>
<dbReference type="EC" id="2.7.11.22"/>
<dbReference type="EMBL" id="AY005133">
    <property type="protein sequence ID" value="AAF89089.1"/>
    <property type="molecule type" value="mRNA"/>
</dbReference>
<dbReference type="EMBL" id="AY904369">
    <property type="protein sequence ID" value="AAW82351.1"/>
    <property type="molecule type" value="mRNA"/>
</dbReference>
<dbReference type="EMBL" id="BC031907">
    <property type="protein sequence ID" value="AAH31907.1"/>
    <property type="molecule type" value="mRNA"/>
</dbReference>
<dbReference type="CCDS" id="CCDS26601.1">
    <molecule id="Q9JHU3-1"/>
</dbReference>
<dbReference type="RefSeq" id="NP_444410.1">
    <molecule id="Q9JHU3-1"/>
    <property type="nucleotide sequence ID" value="NM_053180.2"/>
</dbReference>
<dbReference type="SMR" id="Q9JHU3"/>
<dbReference type="FunCoup" id="Q9JHU3">
    <property type="interactions" value="1650"/>
</dbReference>
<dbReference type="STRING" id="10090.ENSMUSP00000021939"/>
<dbReference type="iPTMnet" id="Q9JHU3"/>
<dbReference type="PhosphoSitePlus" id="Q9JHU3"/>
<dbReference type="jPOST" id="Q9JHU3"/>
<dbReference type="PaxDb" id="10090-ENSMUSP00000021939"/>
<dbReference type="ProteomicsDB" id="281435">
    <molecule id="Q9JHU3-1"/>
</dbReference>
<dbReference type="ProteomicsDB" id="281436">
    <molecule id="Q9JHU3-2"/>
</dbReference>
<dbReference type="Pumba" id="Q9JHU3"/>
<dbReference type="Antibodypedia" id="27918">
    <property type="antibodies" value="350 antibodies from 30 providers"/>
</dbReference>
<dbReference type="DNASU" id="105278"/>
<dbReference type="Ensembl" id="ENSMUST00000021939.8">
    <molecule id="Q9JHU3-1"/>
    <property type="protein sequence ID" value="ENSMUSP00000021939.7"/>
    <property type="gene ID" value="ENSMUSG00000021483.9"/>
</dbReference>
<dbReference type="GeneID" id="105278"/>
<dbReference type="KEGG" id="mmu:105278"/>
<dbReference type="UCSC" id="uc007qyx.1">
    <molecule id="Q9JHU3-1"/>
    <property type="organism name" value="mouse"/>
</dbReference>
<dbReference type="AGR" id="MGI:2145349"/>
<dbReference type="CTD" id="23552"/>
<dbReference type="MGI" id="MGI:2145349">
    <property type="gene designation" value="Cdk20"/>
</dbReference>
<dbReference type="VEuPathDB" id="HostDB:ENSMUSG00000021483"/>
<dbReference type="eggNOG" id="KOG0659">
    <property type="taxonomic scope" value="Eukaryota"/>
</dbReference>
<dbReference type="GeneTree" id="ENSGT00940000159128"/>
<dbReference type="HOGENOM" id="CLU_000288_181_1_1"/>
<dbReference type="InParanoid" id="Q9JHU3"/>
<dbReference type="OMA" id="KITFPYH"/>
<dbReference type="OrthoDB" id="63265at2759"/>
<dbReference type="PhylomeDB" id="Q9JHU3"/>
<dbReference type="TreeFam" id="TF327240"/>
<dbReference type="BRENDA" id="2.7.11.22">
    <property type="organism ID" value="3474"/>
</dbReference>
<dbReference type="BioGRID-ORCS" id="105278">
    <property type="hits" value="3 hits in 81 CRISPR screens"/>
</dbReference>
<dbReference type="ChiTaRS" id="Cdk20">
    <property type="organism name" value="mouse"/>
</dbReference>
<dbReference type="PRO" id="PR:Q9JHU3"/>
<dbReference type="Proteomes" id="UP000000589">
    <property type="component" value="Chromosome 13"/>
</dbReference>
<dbReference type="RNAct" id="Q9JHU3">
    <property type="molecule type" value="protein"/>
</dbReference>
<dbReference type="Bgee" id="ENSMUSG00000021483">
    <property type="expression patterns" value="Expressed in primary oocyte and 123 other cell types or tissues"/>
</dbReference>
<dbReference type="ExpressionAtlas" id="Q9JHU3">
    <property type="expression patterns" value="baseline and differential"/>
</dbReference>
<dbReference type="GO" id="GO:0005929">
    <property type="term" value="C:cilium"/>
    <property type="evidence" value="ECO:0007669"/>
    <property type="project" value="UniProtKB-SubCell"/>
</dbReference>
<dbReference type="GO" id="GO:0005794">
    <property type="term" value="C:Golgi apparatus"/>
    <property type="evidence" value="ECO:0007669"/>
    <property type="project" value="Ensembl"/>
</dbReference>
<dbReference type="GO" id="GO:0005654">
    <property type="term" value="C:nucleoplasm"/>
    <property type="evidence" value="ECO:0007669"/>
    <property type="project" value="Ensembl"/>
</dbReference>
<dbReference type="GO" id="GO:0005524">
    <property type="term" value="F:ATP binding"/>
    <property type="evidence" value="ECO:0007669"/>
    <property type="project" value="UniProtKB-KW"/>
</dbReference>
<dbReference type="GO" id="GO:0004693">
    <property type="term" value="F:cyclin-dependent protein serine/threonine kinase activity"/>
    <property type="evidence" value="ECO:0007669"/>
    <property type="project" value="UniProtKB-EC"/>
</dbReference>
<dbReference type="GO" id="GO:0106310">
    <property type="term" value="F:protein serine kinase activity"/>
    <property type="evidence" value="ECO:0007669"/>
    <property type="project" value="RHEA"/>
</dbReference>
<dbReference type="GO" id="GO:0004674">
    <property type="term" value="F:protein serine/threonine kinase activity"/>
    <property type="evidence" value="ECO:0000266"/>
    <property type="project" value="MGI"/>
</dbReference>
<dbReference type="GO" id="GO:0051301">
    <property type="term" value="P:cell division"/>
    <property type="evidence" value="ECO:0007669"/>
    <property type="project" value="UniProtKB-KW"/>
</dbReference>
<dbReference type="GO" id="GO:1990403">
    <property type="term" value="P:embryonic brain development"/>
    <property type="evidence" value="ECO:0000315"/>
    <property type="project" value="MGI"/>
</dbReference>
<dbReference type="GO" id="GO:0031076">
    <property type="term" value="P:embryonic camera-type eye development"/>
    <property type="evidence" value="ECO:0000315"/>
    <property type="project" value="MGI"/>
</dbReference>
<dbReference type="GO" id="GO:0048706">
    <property type="term" value="P:embryonic skeletal system development"/>
    <property type="evidence" value="ECO:0000315"/>
    <property type="project" value="MGI"/>
</dbReference>
<dbReference type="GO" id="GO:0021508">
    <property type="term" value="P:floor plate formation"/>
    <property type="evidence" value="ECO:0000315"/>
    <property type="project" value="MGI"/>
</dbReference>
<dbReference type="GO" id="GO:0045879">
    <property type="term" value="P:negative regulation of smoothened signaling pathway"/>
    <property type="evidence" value="ECO:0000316"/>
    <property type="project" value="MGI"/>
</dbReference>
<dbReference type="GO" id="GO:0001843">
    <property type="term" value="P:neural tube closure"/>
    <property type="evidence" value="ECO:0000315"/>
    <property type="project" value="MGI"/>
</dbReference>
<dbReference type="GO" id="GO:0060045">
    <property type="term" value="P:positive regulation of cardiac muscle cell proliferation"/>
    <property type="evidence" value="ECO:0000266"/>
    <property type="project" value="MGI"/>
</dbReference>
<dbReference type="GO" id="GO:0061512">
    <property type="term" value="P:protein localization to cilium"/>
    <property type="evidence" value="ECO:0000315"/>
    <property type="project" value="MGI"/>
</dbReference>
<dbReference type="GO" id="GO:1903317">
    <property type="term" value="P:regulation of protein maturation"/>
    <property type="evidence" value="ECO:0000315"/>
    <property type="project" value="MGI"/>
</dbReference>
<dbReference type="GO" id="GO:0008589">
    <property type="term" value="P:regulation of smoothened signaling pathway"/>
    <property type="evidence" value="ECO:0000316"/>
    <property type="project" value="MGI"/>
</dbReference>
<dbReference type="GO" id="GO:0060021">
    <property type="term" value="P:roof of mouth development"/>
    <property type="evidence" value="ECO:0000315"/>
    <property type="project" value="MGI"/>
</dbReference>
<dbReference type="CDD" id="cd07832">
    <property type="entry name" value="STKc_CCRK"/>
    <property type="match status" value="1"/>
</dbReference>
<dbReference type="FunFam" id="1.10.510.10:FF:000406">
    <property type="entry name" value="cyclin-dependent kinase 20 isoform X1"/>
    <property type="match status" value="1"/>
</dbReference>
<dbReference type="FunFam" id="3.30.200.20:FF:000211">
    <property type="entry name" value="Putative cyclin-dependent kinase 20"/>
    <property type="match status" value="1"/>
</dbReference>
<dbReference type="Gene3D" id="3.30.200.20">
    <property type="entry name" value="Phosphorylase Kinase, domain 1"/>
    <property type="match status" value="1"/>
</dbReference>
<dbReference type="Gene3D" id="1.10.510.10">
    <property type="entry name" value="Transferase(Phosphotransferase) domain 1"/>
    <property type="match status" value="1"/>
</dbReference>
<dbReference type="InterPro" id="IPR050108">
    <property type="entry name" value="CDK"/>
</dbReference>
<dbReference type="InterPro" id="IPR048002">
    <property type="entry name" value="CDK20-like_STKc"/>
</dbReference>
<dbReference type="InterPro" id="IPR011009">
    <property type="entry name" value="Kinase-like_dom_sf"/>
</dbReference>
<dbReference type="InterPro" id="IPR000719">
    <property type="entry name" value="Prot_kinase_dom"/>
</dbReference>
<dbReference type="InterPro" id="IPR017441">
    <property type="entry name" value="Protein_kinase_ATP_BS"/>
</dbReference>
<dbReference type="InterPro" id="IPR008271">
    <property type="entry name" value="Ser/Thr_kinase_AS"/>
</dbReference>
<dbReference type="PANTHER" id="PTHR24056">
    <property type="entry name" value="CELL DIVISION PROTEIN KINASE"/>
    <property type="match status" value="1"/>
</dbReference>
<dbReference type="PANTHER" id="PTHR24056:SF171">
    <property type="entry name" value="CYCLIN-DEPENDENT KINASE 20"/>
    <property type="match status" value="1"/>
</dbReference>
<dbReference type="Pfam" id="PF00069">
    <property type="entry name" value="Pkinase"/>
    <property type="match status" value="1"/>
</dbReference>
<dbReference type="SMART" id="SM00220">
    <property type="entry name" value="S_TKc"/>
    <property type="match status" value="1"/>
</dbReference>
<dbReference type="SUPFAM" id="SSF56112">
    <property type="entry name" value="Protein kinase-like (PK-like)"/>
    <property type="match status" value="1"/>
</dbReference>
<dbReference type="PROSITE" id="PS00107">
    <property type="entry name" value="PROTEIN_KINASE_ATP"/>
    <property type="match status" value="1"/>
</dbReference>
<dbReference type="PROSITE" id="PS50011">
    <property type="entry name" value="PROTEIN_KINASE_DOM"/>
    <property type="match status" value="1"/>
</dbReference>
<dbReference type="PROSITE" id="PS00108">
    <property type="entry name" value="PROTEIN_KINASE_ST"/>
    <property type="match status" value="1"/>
</dbReference>